<proteinExistence type="evidence at protein level"/>
<evidence type="ECO:0000250" key="1">
    <source>
        <dbReference type="UniProtKB" id="O22317"/>
    </source>
</evidence>
<evidence type="ECO:0000269" key="2">
    <source>
    </source>
</evidence>
<evidence type="ECO:0000305" key="3"/>
<dbReference type="EC" id="3.2.1.39"/>
<dbReference type="EMBL" id="X67099">
    <property type="protein sequence ID" value="CAA47473.1"/>
    <property type="molecule type" value="Genomic_DNA"/>
</dbReference>
<dbReference type="PIR" id="S29311">
    <property type="entry name" value="S29311"/>
</dbReference>
<dbReference type="SMR" id="Q02126"/>
<dbReference type="CAZy" id="GH17">
    <property type="family name" value="Glycoside Hydrolase Family 17"/>
</dbReference>
<dbReference type="BRENDA" id="3.2.1.39">
    <property type="organism ID" value="2687"/>
</dbReference>
<dbReference type="SABIO-RK" id="Q02126"/>
<dbReference type="ExpressionAtlas" id="Q02126">
    <property type="expression patterns" value="baseline and differential"/>
</dbReference>
<dbReference type="GO" id="GO:0042973">
    <property type="term" value="F:glucan endo-1,3-beta-D-glucosidase activity"/>
    <property type="evidence" value="ECO:0007669"/>
    <property type="project" value="UniProtKB-EC"/>
</dbReference>
<dbReference type="GO" id="GO:0005975">
    <property type="term" value="P:carbohydrate metabolic process"/>
    <property type="evidence" value="ECO:0007669"/>
    <property type="project" value="InterPro"/>
</dbReference>
<dbReference type="GO" id="GO:0006952">
    <property type="term" value="P:defense response"/>
    <property type="evidence" value="ECO:0007669"/>
    <property type="project" value="UniProtKB-KW"/>
</dbReference>
<dbReference type="FunFam" id="3.20.20.80:FF:000010">
    <property type="entry name" value="glucan endo-1,3-beta-glucosidase, basic"/>
    <property type="match status" value="1"/>
</dbReference>
<dbReference type="Gene3D" id="3.20.20.80">
    <property type="entry name" value="Glycosidases"/>
    <property type="match status" value="1"/>
</dbReference>
<dbReference type="InterPro" id="IPR000490">
    <property type="entry name" value="Glyco_hydro_17"/>
</dbReference>
<dbReference type="InterPro" id="IPR044965">
    <property type="entry name" value="Glyco_hydro_17_plant"/>
</dbReference>
<dbReference type="InterPro" id="IPR017853">
    <property type="entry name" value="Glycoside_hydrolase_SF"/>
</dbReference>
<dbReference type="PANTHER" id="PTHR32227">
    <property type="entry name" value="GLUCAN ENDO-1,3-BETA-GLUCOSIDASE BG1-RELATED-RELATED"/>
    <property type="match status" value="1"/>
</dbReference>
<dbReference type="Pfam" id="PF00332">
    <property type="entry name" value="Glyco_hydro_17"/>
    <property type="match status" value="1"/>
</dbReference>
<dbReference type="SUPFAM" id="SSF51445">
    <property type="entry name" value="(Trans)glycosidases"/>
    <property type="match status" value="1"/>
</dbReference>
<dbReference type="PROSITE" id="PS00587">
    <property type="entry name" value="GLYCOSYL_HYDROL_F17"/>
    <property type="match status" value="1"/>
</dbReference>
<protein>
    <recommendedName>
        <fullName>Glucan endo-1,3-beta-glucosidase GIII</fullName>
        <ecNumber>3.2.1.39</ecNumber>
    </recommendedName>
    <alternativeName>
        <fullName>(1-&gt;3)-beta-glucan endohydrolase GIII</fullName>
    </alternativeName>
    <alternativeName>
        <fullName>(1-&gt;3)-beta-glucanase isoenzyme GIII</fullName>
    </alternativeName>
    <alternativeName>
        <fullName>Beta-1,3-endoglucanase GIII</fullName>
    </alternativeName>
</protein>
<keyword id="KW-0903">Direct protein sequencing</keyword>
<keyword id="KW-0326">Glycosidase</keyword>
<keyword id="KW-0378">Hydrolase</keyword>
<keyword id="KW-0611">Plant defense</keyword>
<keyword id="KW-0732">Signal</keyword>
<sequence>MARKGVDVAVALVLVALAAFPAVHSIGVCNGVLGNNLPAPSDVVTLYRSKRIDAMRIYEPESKVLTALSGTGIAVLMDVGPALPSLASSPSAAAAWVKANVSSFPGVSFRYIAVRNEVMDSAGQSTILPAMRNVQRALAAAGSPIKVSTSVRFDVFNNTSPPSNGVLADKSGFLRPILNFLARPARPLLANVYPYFAYKGNPRDIQLTFATFVPGSTTVNDNGLTYTNLFDAMVDSIYAALEKAGTPGVKVVISESGWPSDQGFGATAQNARAYNQGLINHVGNGSPKKAGALESYIFAMFNENLKDGDELEKNFGLFKPNMSPAYAITF</sequence>
<accession>Q02126</accession>
<reference key="1">
    <citation type="journal article" date="1992" name="Eur. J. Biochem.">
        <title>Purification, characterization and gene structure of (1--&gt;3)-beta-glucanase isoenzyme GIII from barley (Hordeum vulgare).</title>
        <authorList>
            <person name="Wang J."/>
            <person name="Xu P."/>
            <person name="Fincher G.B."/>
        </authorList>
    </citation>
    <scope>NUCLEOTIDE SEQUENCE [GENOMIC DNA]</scope>
    <scope>PARTIAL PROTEIN SEQUENCE</scope>
    <source>
        <strain>cv. Clipper</strain>
        <strain>cv. NK 1558</strain>
    </source>
</reference>
<reference key="2">
    <citation type="journal article" date="1992" name="Gene">
        <title>Evolution and differential expression of the (1--&gt;3)-beta-glucan endohydrolase-encoding gene family in barley, Hordeum vulgare.</title>
        <authorList>
            <person name="Xu P."/>
            <person name="Wang J."/>
            <person name="Fincher G.B."/>
        </authorList>
    </citation>
    <scope>NUCLEOTIDE SEQUENCE [GENOMIC DNA] OF 26-330</scope>
</reference>
<reference key="3">
    <citation type="journal article" date="1993" name="Biochem. J.">
        <title>Purification and properties of three (1--&gt;3)-beta-D-glucanase isoenzymes from young leaves of barley (Hordeum vulgare).</title>
        <authorList>
            <person name="Hrmova M."/>
            <person name="Fincher G.B."/>
        </authorList>
    </citation>
    <scope>PROTEIN SEQUENCE OF 26-37</scope>
    <source>
        <strain>cv. Clipper</strain>
    </source>
</reference>
<feature type="signal peptide" evidence="2">
    <location>
        <begin position="1"/>
        <end position="25"/>
    </location>
</feature>
<feature type="chain" id="PRO_0000011849" description="Glucan endo-1,3-beta-glucosidase GIII">
    <location>
        <begin position="26"/>
        <end position="330"/>
    </location>
</feature>
<feature type="active site" description="Proton donor" evidence="1">
    <location>
        <position position="117"/>
    </location>
</feature>
<feature type="active site" description="Nucleophile" evidence="1">
    <location>
        <position position="255"/>
    </location>
</feature>
<feature type="sequence conflict" description="In Ref. 2." evidence="3" ref="2">
    <original>D</original>
    <variation>S</variation>
    <location>
        <position position="169"/>
    </location>
</feature>
<name>E13C_HORVU</name>
<organism>
    <name type="scientific">Hordeum vulgare</name>
    <name type="common">Barley</name>
    <dbReference type="NCBI Taxonomy" id="4513"/>
    <lineage>
        <taxon>Eukaryota</taxon>
        <taxon>Viridiplantae</taxon>
        <taxon>Streptophyta</taxon>
        <taxon>Embryophyta</taxon>
        <taxon>Tracheophyta</taxon>
        <taxon>Spermatophyta</taxon>
        <taxon>Magnoliopsida</taxon>
        <taxon>Liliopsida</taxon>
        <taxon>Poales</taxon>
        <taxon>Poaceae</taxon>
        <taxon>BOP clade</taxon>
        <taxon>Pooideae</taxon>
        <taxon>Triticodae</taxon>
        <taxon>Triticeae</taxon>
        <taxon>Hordeinae</taxon>
        <taxon>Hordeum</taxon>
    </lineage>
</organism>
<comment type="function">
    <text>May provide a degree of protection against microbial invasion of germinated barley grain through its ability to degrade fungal cell wall polysaccharides.</text>
</comment>
<comment type="catalytic activity">
    <reaction>
        <text>Hydrolysis of (1-&gt;3)-beta-D-glucosidic linkages in (1-&gt;3)-beta-D-glucans.</text>
        <dbReference type="EC" id="3.2.1.39"/>
    </reaction>
</comment>
<comment type="developmental stage">
    <text>Accumulates in developing leaves.</text>
</comment>
<comment type="similarity">
    <text evidence="3">Belongs to the glycosyl hydrolase 17 family.</text>
</comment>